<dbReference type="EMBL" id="L35302">
    <property type="protein sequence ID" value="AAC37663.1"/>
    <property type="molecule type" value="mRNA"/>
</dbReference>
<dbReference type="EMBL" id="AK029135">
    <property type="protein sequence ID" value="BAC26315.1"/>
    <property type="molecule type" value="mRNA"/>
</dbReference>
<dbReference type="EMBL" id="AK169515">
    <property type="protein sequence ID" value="BAE41205.1"/>
    <property type="molecule type" value="mRNA"/>
</dbReference>
<dbReference type="EMBL" id="AK172598">
    <property type="protein sequence ID" value="BAE43086.1"/>
    <property type="molecule type" value="mRNA"/>
</dbReference>
<dbReference type="EMBL" id="AL929068">
    <property type="status" value="NOT_ANNOTATED_CDS"/>
    <property type="molecule type" value="Genomic_DNA"/>
</dbReference>
<dbReference type="EMBL" id="CH466542">
    <property type="protein sequence ID" value="EDL08637.1"/>
    <property type="molecule type" value="Genomic_DNA"/>
</dbReference>
<dbReference type="CCDS" id="CCDS15956.1"/>
<dbReference type="PIR" id="A54750">
    <property type="entry name" value="A54750"/>
</dbReference>
<dbReference type="RefSeq" id="NP_001313530.1">
    <property type="nucleotide sequence ID" value="NM_001326601.1"/>
</dbReference>
<dbReference type="RefSeq" id="NP_033447.2">
    <property type="nucleotide sequence ID" value="NM_009421.4"/>
</dbReference>
<dbReference type="RefSeq" id="XP_011237352.1">
    <property type="nucleotide sequence ID" value="XM_011239050.4"/>
</dbReference>
<dbReference type="RefSeq" id="XP_011237353.1">
    <property type="nucleotide sequence ID" value="XM_011239051.4"/>
</dbReference>
<dbReference type="RefSeq" id="XP_011237354.1">
    <property type="nucleotide sequence ID" value="XM_011239052.4"/>
</dbReference>
<dbReference type="RefSeq" id="XP_011237355.1">
    <property type="nucleotide sequence ID" value="XM_011239053.4"/>
</dbReference>
<dbReference type="RefSeq" id="XP_011237356.1">
    <property type="nucleotide sequence ID" value="XM_011239054.4"/>
</dbReference>
<dbReference type="RefSeq" id="XP_017172618.1">
    <property type="nucleotide sequence ID" value="XM_017317129.1"/>
</dbReference>
<dbReference type="SMR" id="P39428"/>
<dbReference type="BioGRID" id="204302">
    <property type="interactions" value="6"/>
</dbReference>
<dbReference type="DIP" id="DIP-260N"/>
<dbReference type="FunCoup" id="P39428">
    <property type="interactions" value="330"/>
</dbReference>
<dbReference type="IntAct" id="P39428">
    <property type="interactions" value="35"/>
</dbReference>
<dbReference type="STRING" id="10090.ENSMUSP00000130759"/>
<dbReference type="MoonDB" id="P39428">
    <property type="type" value="Predicted"/>
</dbReference>
<dbReference type="iPTMnet" id="P39428"/>
<dbReference type="PhosphoSitePlus" id="P39428"/>
<dbReference type="jPOST" id="P39428"/>
<dbReference type="PaxDb" id="10090-ENSMUSP00000130759"/>
<dbReference type="PeptideAtlas" id="P39428"/>
<dbReference type="ProteomicsDB" id="260735"/>
<dbReference type="Antibodypedia" id="807">
    <property type="antibodies" value="389 antibodies from 40 providers"/>
</dbReference>
<dbReference type="DNASU" id="22029"/>
<dbReference type="Ensembl" id="ENSMUST00000028234.12">
    <property type="protein sequence ID" value="ENSMUSP00000028234.6"/>
    <property type="gene ID" value="ENSMUSG00000026875.15"/>
</dbReference>
<dbReference type="Ensembl" id="ENSMUST00000113064.8">
    <property type="protein sequence ID" value="ENSMUSP00000108687.2"/>
    <property type="gene ID" value="ENSMUSG00000026875.15"/>
</dbReference>
<dbReference type="Ensembl" id="ENSMUST00000172159.8">
    <property type="protein sequence ID" value="ENSMUSP00000130759.2"/>
    <property type="gene ID" value="ENSMUSG00000026875.15"/>
</dbReference>
<dbReference type="GeneID" id="22029"/>
<dbReference type="KEGG" id="mmu:22029"/>
<dbReference type="UCSC" id="uc008jjj.1">
    <property type="organism name" value="mouse"/>
</dbReference>
<dbReference type="AGR" id="MGI:101836"/>
<dbReference type="CTD" id="7185"/>
<dbReference type="MGI" id="MGI:101836">
    <property type="gene designation" value="Traf1"/>
</dbReference>
<dbReference type="VEuPathDB" id="HostDB:ENSMUSG00000026875"/>
<dbReference type="eggNOG" id="KOG0297">
    <property type="taxonomic scope" value="Eukaryota"/>
</dbReference>
<dbReference type="GeneTree" id="ENSGT00940000161076"/>
<dbReference type="HOGENOM" id="CLU_021061_0_0_1"/>
<dbReference type="InParanoid" id="P39428"/>
<dbReference type="OMA" id="CIVETNA"/>
<dbReference type="OrthoDB" id="6499288at2759"/>
<dbReference type="PhylomeDB" id="P39428"/>
<dbReference type="TreeFam" id="TF321154"/>
<dbReference type="Reactome" id="R-MMU-5357905">
    <property type="pathway name" value="Regulation of TNFR1 signaling"/>
</dbReference>
<dbReference type="Reactome" id="R-MMU-5357956">
    <property type="pathway name" value="TNFR1-induced NF-kappa-B signaling pathway"/>
</dbReference>
<dbReference type="BioGRID-ORCS" id="22029">
    <property type="hits" value="3 hits in 78 CRISPR screens"/>
</dbReference>
<dbReference type="ChiTaRS" id="Traf1">
    <property type="organism name" value="mouse"/>
</dbReference>
<dbReference type="PRO" id="PR:P39428"/>
<dbReference type="Proteomes" id="UP000000589">
    <property type="component" value="Chromosome 2"/>
</dbReference>
<dbReference type="RNAct" id="P39428">
    <property type="molecule type" value="protein"/>
</dbReference>
<dbReference type="Bgee" id="ENSMUSG00000026875">
    <property type="expression patterns" value="Expressed in peripheral lymph node and 110 other cell types or tissues"/>
</dbReference>
<dbReference type="ExpressionAtlas" id="P39428">
    <property type="expression patterns" value="baseline and differential"/>
</dbReference>
<dbReference type="GO" id="GO:0005737">
    <property type="term" value="C:cytoplasm"/>
    <property type="evidence" value="ECO:0007669"/>
    <property type="project" value="UniProtKB-SubCell"/>
</dbReference>
<dbReference type="GO" id="GO:0042802">
    <property type="term" value="F:identical protein binding"/>
    <property type="evidence" value="ECO:0007669"/>
    <property type="project" value="Ensembl"/>
</dbReference>
<dbReference type="GO" id="GO:0031996">
    <property type="term" value="F:thioesterase binding"/>
    <property type="evidence" value="ECO:0007669"/>
    <property type="project" value="Ensembl"/>
</dbReference>
<dbReference type="GO" id="GO:0005164">
    <property type="term" value="F:tumor necrosis factor receptor binding"/>
    <property type="evidence" value="ECO:0007669"/>
    <property type="project" value="Ensembl"/>
</dbReference>
<dbReference type="GO" id="GO:0031625">
    <property type="term" value="F:ubiquitin protein ligase binding"/>
    <property type="evidence" value="ECO:0007669"/>
    <property type="project" value="Ensembl"/>
</dbReference>
<dbReference type="GO" id="GO:0008270">
    <property type="term" value="F:zinc ion binding"/>
    <property type="evidence" value="ECO:0007669"/>
    <property type="project" value="InterPro"/>
</dbReference>
<dbReference type="GO" id="GO:0006915">
    <property type="term" value="P:apoptotic process"/>
    <property type="evidence" value="ECO:0007669"/>
    <property type="project" value="UniProtKB-KW"/>
</dbReference>
<dbReference type="GO" id="GO:2001236">
    <property type="term" value="P:regulation of extrinsic apoptotic signaling pathway"/>
    <property type="evidence" value="ECO:0007669"/>
    <property type="project" value="Ensembl"/>
</dbReference>
<dbReference type="GO" id="GO:0007165">
    <property type="term" value="P:signal transduction"/>
    <property type="evidence" value="ECO:0007669"/>
    <property type="project" value="InterPro"/>
</dbReference>
<dbReference type="CDD" id="cd03779">
    <property type="entry name" value="MATH_TRAF1"/>
    <property type="match status" value="1"/>
</dbReference>
<dbReference type="FunFam" id="1.20.5.110:FF:000053">
    <property type="entry name" value="TNF receptor-associated factor"/>
    <property type="match status" value="1"/>
</dbReference>
<dbReference type="FunFam" id="2.60.210.10:FF:000001">
    <property type="entry name" value="TNF receptor-associated factor"/>
    <property type="match status" value="1"/>
</dbReference>
<dbReference type="Gene3D" id="1.20.5.110">
    <property type="match status" value="1"/>
</dbReference>
<dbReference type="Gene3D" id="2.60.210.10">
    <property type="entry name" value="Apoptosis, Tumor Necrosis Factor Receptor Associated Protein 2, Chain A"/>
    <property type="match status" value="1"/>
</dbReference>
<dbReference type="InterPro" id="IPR002083">
    <property type="entry name" value="MATH/TRAF_dom"/>
</dbReference>
<dbReference type="InterPro" id="IPR012227">
    <property type="entry name" value="TNF_rcpt-assoc_TRAF_met"/>
</dbReference>
<dbReference type="InterPro" id="IPR008974">
    <property type="entry name" value="TRAF-like"/>
</dbReference>
<dbReference type="InterPro" id="IPR049342">
    <property type="entry name" value="TRAF1-6_MATH_dom"/>
</dbReference>
<dbReference type="InterPro" id="IPR037306">
    <property type="entry name" value="TRAF1_MATH"/>
</dbReference>
<dbReference type="InterPro" id="IPR032070">
    <property type="entry name" value="TRAF_BIRC3-bd"/>
</dbReference>
<dbReference type="PANTHER" id="PTHR10131">
    <property type="entry name" value="TNF RECEPTOR ASSOCIATED FACTOR"/>
    <property type="match status" value="1"/>
</dbReference>
<dbReference type="PANTHER" id="PTHR10131:SF96">
    <property type="entry name" value="TNF RECEPTOR-ASSOCIATED FACTOR 1"/>
    <property type="match status" value="1"/>
</dbReference>
<dbReference type="Pfam" id="PF21355">
    <property type="entry name" value="TRAF-mep_MATH"/>
    <property type="match status" value="1"/>
</dbReference>
<dbReference type="Pfam" id="PF16673">
    <property type="entry name" value="TRAF_BIRC3_bd"/>
    <property type="match status" value="1"/>
</dbReference>
<dbReference type="PIRSF" id="PIRSF015614">
    <property type="entry name" value="TRAF"/>
    <property type="match status" value="1"/>
</dbReference>
<dbReference type="SMART" id="SM00061">
    <property type="entry name" value="MATH"/>
    <property type="match status" value="1"/>
</dbReference>
<dbReference type="SUPFAM" id="SSF49599">
    <property type="entry name" value="TRAF domain-like"/>
    <property type="match status" value="1"/>
</dbReference>
<dbReference type="PROSITE" id="PS50144">
    <property type="entry name" value="MATH"/>
    <property type="match status" value="1"/>
</dbReference>
<evidence type="ECO:0000250" key="1"/>
<evidence type="ECO:0000250" key="2">
    <source>
        <dbReference type="UniProtKB" id="Q13077"/>
    </source>
</evidence>
<evidence type="ECO:0000255" key="3">
    <source>
        <dbReference type="PROSITE-ProRule" id="PRU00129"/>
    </source>
</evidence>
<evidence type="ECO:0000269" key="4">
    <source>
    </source>
</evidence>
<evidence type="ECO:0000269" key="5">
    <source>
    </source>
</evidence>
<evidence type="ECO:0000269" key="6">
    <source>
    </source>
</evidence>
<evidence type="ECO:0000269" key="7">
    <source>
    </source>
</evidence>
<evidence type="ECO:0000269" key="8">
    <source>
    </source>
</evidence>
<evidence type="ECO:0000269" key="9">
    <source>
    </source>
</evidence>
<evidence type="ECO:0000269" key="10">
    <source>
    </source>
</evidence>
<evidence type="ECO:0000269" key="11">
    <source>
    </source>
</evidence>
<evidence type="ECO:0000269" key="12">
    <source>
    </source>
</evidence>
<evidence type="ECO:0000305" key="13"/>
<keyword id="KW-0053">Apoptosis</keyword>
<keyword id="KW-0175">Coiled coil</keyword>
<keyword id="KW-0963">Cytoplasm</keyword>
<keyword id="KW-0903">Direct protein sequencing</keyword>
<keyword id="KW-1017">Isopeptide bond</keyword>
<keyword id="KW-0597">Phosphoprotein</keyword>
<keyword id="KW-1185">Reference proteome</keyword>
<keyword id="KW-0832">Ubl conjugation</keyword>
<organism>
    <name type="scientific">Mus musculus</name>
    <name type="common">Mouse</name>
    <dbReference type="NCBI Taxonomy" id="10090"/>
    <lineage>
        <taxon>Eukaryota</taxon>
        <taxon>Metazoa</taxon>
        <taxon>Chordata</taxon>
        <taxon>Craniata</taxon>
        <taxon>Vertebrata</taxon>
        <taxon>Euteleostomi</taxon>
        <taxon>Mammalia</taxon>
        <taxon>Eutheria</taxon>
        <taxon>Euarchontoglires</taxon>
        <taxon>Glires</taxon>
        <taxon>Rodentia</taxon>
        <taxon>Myomorpha</taxon>
        <taxon>Muroidea</taxon>
        <taxon>Muridae</taxon>
        <taxon>Murinae</taxon>
        <taxon>Mus</taxon>
        <taxon>Mus</taxon>
    </lineage>
</organism>
<protein>
    <recommendedName>
        <fullName>TNF receptor-associated factor 1</fullName>
    </recommendedName>
</protein>
<feature type="chain" id="PRO_0000056398" description="TNF receptor-associated factor 1">
    <location>
        <begin position="1"/>
        <end position="409"/>
    </location>
</feature>
<feature type="domain" description="MATH" evidence="3">
    <location>
        <begin position="259"/>
        <end position="405"/>
    </location>
</feature>
<feature type="coiled-coil region" evidence="1">
    <location>
        <begin position="167"/>
        <end position="256"/>
    </location>
</feature>
<feature type="site" description="Cleavage; by CASP8" evidence="1">
    <location>
        <begin position="156"/>
        <end position="157"/>
    </location>
</feature>
<feature type="modified residue" description="Phosphoserine" evidence="7">
    <location>
        <position position="139"/>
    </location>
</feature>
<feature type="cross-link" description="Glycyl lysine isopeptide (Lys-Gly) (interchain with G-Cter in ubiquitin)" evidence="2">
    <location>
        <position position="178"/>
    </location>
</feature>
<feature type="cross-link" description="Glycyl lysine isopeptide (Lys-Gly) (interchain with G-Cter in ubiquitin)" evidence="2">
    <location>
        <position position="186"/>
    </location>
</feature>
<feature type="mutagenesis site" description="Loss of phosphorylation site. Reduces global phosphorylation." evidence="7">
    <original>S</original>
    <variation>A</variation>
    <location>
        <position position="139"/>
    </location>
</feature>
<feature type="mutagenesis site" description="Decreased interaction with FBXL2." evidence="10">
    <original>W</original>
    <variation>A</variation>
    <location>
        <position position="264"/>
    </location>
</feature>
<feature type="sequence conflict" description="In Ref. 1; AAC37663." evidence="13" ref="1">
    <original>I</original>
    <variation>L</variation>
    <location>
        <position position="222"/>
    </location>
</feature>
<accession>P39428</accession>
<accession>Q8CE28</accession>
<proteinExistence type="evidence at protein level"/>
<gene>
    <name type="primary">Traf1</name>
</gene>
<name>TRAF1_MOUSE</name>
<sequence>MASSSAPDENEFQFGCPPAPCQDPSEPRVLCCTACLSENLRDDEDRICPKCRADNLHPVSPGSPLTQEKVHSDVAEAEIMCPFAGVGCSFKGSPQSMQEHEATSQSSHLYLLLAVLKEWKSSPGSNLGSAPMALERNLSELQLQAAVEATGDLEVDCYRAPCCESQEELALQHLVKEKLLAQLEEKLRVFANIVAVLNKEVEASHLALAASIHQSQLDREHILSLEQRVVELQQTLAQKDQVLGKLEHSLRLMEEASFDGTFLWKITNVTKRCHESVCGRTVSLFSPAFYTAKYGYKLCLRLYLNGDGSGKKTHLSLFIVIMRGEYDALLPWPFRNKVTFMLLDQNNREHAIDAFRPDLSSASFQRPQSETNVASGCPLFFPLSKLQSPKHAYVKDDTMFLKCIVDTSA</sequence>
<reference key="1">
    <citation type="journal article" date="1994" name="Cell">
        <title>A novel family of putative signal transducers associated with the cytoplasmic domain of the 75 kDa tumor necrosis factor receptor.</title>
        <authorList>
            <person name="Rothe M."/>
            <person name="Wong S.C."/>
            <person name="Henzel W.J."/>
            <person name="Goeddel D.V."/>
        </authorList>
    </citation>
    <scope>NUCLEOTIDE SEQUENCE [MRNA]</scope>
    <scope>PROTEIN SEQUENCE OF 123-135 AND 390-402</scope>
    <scope>INTERACTION WITH TRAF2 AND TNFRSF1B</scope>
</reference>
<reference key="2">
    <citation type="journal article" date="2005" name="Science">
        <title>The transcriptional landscape of the mammalian genome.</title>
        <authorList>
            <person name="Carninci P."/>
            <person name="Kasukawa T."/>
            <person name="Katayama S."/>
            <person name="Gough J."/>
            <person name="Frith M.C."/>
            <person name="Maeda N."/>
            <person name="Oyama R."/>
            <person name="Ravasi T."/>
            <person name="Lenhard B."/>
            <person name="Wells C."/>
            <person name="Kodzius R."/>
            <person name="Shimokawa K."/>
            <person name="Bajic V.B."/>
            <person name="Brenner S.E."/>
            <person name="Batalov S."/>
            <person name="Forrest A.R."/>
            <person name="Zavolan M."/>
            <person name="Davis M.J."/>
            <person name="Wilming L.G."/>
            <person name="Aidinis V."/>
            <person name="Allen J.E."/>
            <person name="Ambesi-Impiombato A."/>
            <person name="Apweiler R."/>
            <person name="Aturaliya R.N."/>
            <person name="Bailey T.L."/>
            <person name="Bansal M."/>
            <person name="Baxter L."/>
            <person name="Beisel K.W."/>
            <person name="Bersano T."/>
            <person name="Bono H."/>
            <person name="Chalk A.M."/>
            <person name="Chiu K.P."/>
            <person name="Choudhary V."/>
            <person name="Christoffels A."/>
            <person name="Clutterbuck D.R."/>
            <person name="Crowe M.L."/>
            <person name="Dalla E."/>
            <person name="Dalrymple B.P."/>
            <person name="de Bono B."/>
            <person name="Della Gatta G."/>
            <person name="di Bernardo D."/>
            <person name="Down T."/>
            <person name="Engstrom P."/>
            <person name="Fagiolini M."/>
            <person name="Faulkner G."/>
            <person name="Fletcher C.F."/>
            <person name="Fukushima T."/>
            <person name="Furuno M."/>
            <person name="Futaki S."/>
            <person name="Gariboldi M."/>
            <person name="Georgii-Hemming P."/>
            <person name="Gingeras T.R."/>
            <person name="Gojobori T."/>
            <person name="Green R.E."/>
            <person name="Gustincich S."/>
            <person name="Harbers M."/>
            <person name="Hayashi Y."/>
            <person name="Hensch T.K."/>
            <person name="Hirokawa N."/>
            <person name="Hill D."/>
            <person name="Huminiecki L."/>
            <person name="Iacono M."/>
            <person name="Ikeo K."/>
            <person name="Iwama A."/>
            <person name="Ishikawa T."/>
            <person name="Jakt M."/>
            <person name="Kanapin A."/>
            <person name="Katoh M."/>
            <person name="Kawasawa Y."/>
            <person name="Kelso J."/>
            <person name="Kitamura H."/>
            <person name="Kitano H."/>
            <person name="Kollias G."/>
            <person name="Krishnan S.P."/>
            <person name="Kruger A."/>
            <person name="Kummerfeld S.K."/>
            <person name="Kurochkin I.V."/>
            <person name="Lareau L.F."/>
            <person name="Lazarevic D."/>
            <person name="Lipovich L."/>
            <person name="Liu J."/>
            <person name="Liuni S."/>
            <person name="McWilliam S."/>
            <person name="Madan Babu M."/>
            <person name="Madera M."/>
            <person name="Marchionni L."/>
            <person name="Matsuda H."/>
            <person name="Matsuzawa S."/>
            <person name="Miki H."/>
            <person name="Mignone F."/>
            <person name="Miyake S."/>
            <person name="Morris K."/>
            <person name="Mottagui-Tabar S."/>
            <person name="Mulder N."/>
            <person name="Nakano N."/>
            <person name="Nakauchi H."/>
            <person name="Ng P."/>
            <person name="Nilsson R."/>
            <person name="Nishiguchi S."/>
            <person name="Nishikawa S."/>
            <person name="Nori F."/>
            <person name="Ohara O."/>
            <person name="Okazaki Y."/>
            <person name="Orlando V."/>
            <person name="Pang K.C."/>
            <person name="Pavan W.J."/>
            <person name="Pavesi G."/>
            <person name="Pesole G."/>
            <person name="Petrovsky N."/>
            <person name="Piazza S."/>
            <person name="Reed J."/>
            <person name="Reid J.F."/>
            <person name="Ring B.Z."/>
            <person name="Ringwald M."/>
            <person name="Rost B."/>
            <person name="Ruan Y."/>
            <person name="Salzberg S.L."/>
            <person name="Sandelin A."/>
            <person name="Schneider C."/>
            <person name="Schoenbach C."/>
            <person name="Sekiguchi K."/>
            <person name="Semple C.A."/>
            <person name="Seno S."/>
            <person name="Sessa L."/>
            <person name="Sheng Y."/>
            <person name="Shibata Y."/>
            <person name="Shimada H."/>
            <person name="Shimada K."/>
            <person name="Silva D."/>
            <person name="Sinclair B."/>
            <person name="Sperling S."/>
            <person name="Stupka E."/>
            <person name="Sugiura K."/>
            <person name="Sultana R."/>
            <person name="Takenaka Y."/>
            <person name="Taki K."/>
            <person name="Tammoja K."/>
            <person name="Tan S.L."/>
            <person name="Tang S."/>
            <person name="Taylor M.S."/>
            <person name="Tegner J."/>
            <person name="Teichmann S.A."/>
            <person name="Ueda H.R."/>
            <person name="van Nimwegen E."/>
            <person name="Verardo R."/>
            <person name="Wei C.L."/>
            <person name="Yagi K."/>
            <person name="Yamanishi H."/>
            <person name="Zabarovsky E."/>
            <person name="Zhu S."/>
            <person name="Zimmer A."/>
            <person name="Hide W."/>
            <person name="Bult C."/>
            <person name="Grimmond S.M."/>
            <person name="Teasdale R.D."/>
            <person name="Liu E.T."/>
            <person name="Brusic V."/>
            <person name="Quackenbush J."/>
            <person name="Wahlestedt C."/>
            <person name="Mattick J.S."/>
            <person name="Hume D.A."/>
            <person name="Kai C."/>
            <person name="Sasaki D."/>
            <person name="Tomaru Y."/>
            <person name="Fukuda S."/>
            <person name="Kanamori-Katayama M."/>
            <person name="Suzuki M."/>
            <person name="Aoki J."/>
            <person name="Arakawa T."/>
            <person name="Iida J."/>
            <person name="Imamura K."/>
            <person name="Itoh M."/>
            <person name="Kato T."/>
            <person name="Kawaji H."/>
            <person name="Kawagashira N."/>
            <person name="Kawashima T."/>
            <person name="Kojima M."/>
            <person name="Kondo S."/>
            <person name="Konno H."/>
            <person name="Nakano K."/>
            <person name="Ninomiya N."/>
            <person name="Nishio T."/>
            <person name="Okada M."/>
            <person name="Plessy C."/>
            <person name="Shibata K."/>
            <person name="Shiraki T."/>
            <person name="Suzuki S."/>
            <person name="Tagami M."/>
            <person name="Waki K."/>
            <person name="Watahiki A."/>
            <person name="Okamura-Oho Y."/>
            <person name="Suzuki H."/>
            <person name="Kawai J."/>
            <person name="Hayashizaki Y."/>
        </authorList>
    </citation>
    <scope>NUCLEOTIDE SEQUENCE [LARGE SCALE MRNA]</scope>
    <source>
        <strain>C57BL/6J</strain>
        <strain>NOD</strain>
        <tissue>Skin</tissue>
        <tissue>Spleen</tissue>
        <tissue>Thymus</tissue>
    </source>
</reference>
<reference key="3">
    <citation type="journal article" date="2009" name="PLoS Biol.">
        <title>Lineage-specific biology revealed by a finished genome assembly of the mouse.</title>
        <authorList>
            <person name="Church D.M."/>
            <person name="Goodstadt L."/>
            <person name="Hillier L.W."/>
            <person name="Zody M.C."/>
            <person name="Goldstein S."/>
            <person name="She X."/>
            <person name="Bult C.J."/>
            <person name="Agarwala R."/>
            <person name="Cherry J.L."/>
            <person name="DiCuccio M."/>
            <person name="Hlavina W."/>
            <person name="Kapustin Y."/>
            <person name="Meric P."/>
            <person name="Maglott D."/>
            <person name="Birtle Z."/>
            <person name="Marques A.C."/>
            <person name="Graves T."/>
            <person name="Zhou S."/>
            <person name="Teague B."/>
            <person name="Potamousis K."/>
            <person name="Churas C."/>
            <person name="Place M."/>
            <person name="Herschleb J."/>
            <person name="Runnheim R."/>
            <person name="Forrest D."/>
            <person name="Amos-Landgraf J."/>
            <person name="Schwartz D.C."/>
            <person name="Cheng Z."/>
            <person name="Lindblad-Toh K."/>
            <person name="Eichler E.E."/>
            <person name="Ponting C.P."/>
        </authorList>
    </citation>
    <scope>NUCLEOTIDE SEQUENCE [LARGE SCALE GENOMIC DNA]</scope>
    <source>
        <strain>C57BL/6J</strain>
    </source>
</reference>
<reference key="4">
    <citation type="submission" date="2005-07" db="EMBL/GenBank/DDBJ databases">
        <authorList>
            <person name="Mural R.J."/>
            <person name="Adams M.D."/>
            <person name="Myers E.W."/>
            <person name="Smith H.O."/>
            <person name="Venter J.C."/>
        </authorList>
    </citation>
    <scope>NUCLEOTIDE SEQUENCE [LARGE SCALE GENOMIC DNA]</scope>
</reference>
<reference key="5">
    <citation type="journal article" date="1997" name="J. Exp. Med.">
        <title>TRAF-interacting protein (TRIP): a novel component of the tumor necrosis factor receptor (TNFR)- and CD30-TRAF signaling complexes that inhibits TRAF2-mediated NF-kappaB activation.</title>
        <authorList>
            <person name="Lee S.Y."/>
            <person name="Lee S.Y."/>
            <person name="Choi Y."/>
        </authorList>
    </citation>
    <scope>INTERACTION WITH TRAIP</scope>
</reference>
<reference key="6">
    <citation type="journal article" date="2001" name="Immunity">
        <title>TRAF1 is a negative regulator of TNF signaling. enhanced TNF signaling in TRAF1-deficient mice.</title>
        <authorList>
            <person name="Tsitsikov E.N."/>
            <person name="Laouini D."/>
            <person name="Dunn I.F."/>
            <person name="Sannikova T.Y."/>
            <person name="Davidson L."/>
            <person name="Alt F.W."/>
            <person name="Geha R.S."/>
        </authorList>
    </citation>
    <scope>DISRUPTION PHENOTYPE</scope>
    <scope>FUNCTION</scope>
</reference>
<reference key="7">
    <citation type="journal article" date="2002" name="Mol. Cell">
        <title>A mammalian homolog of Drosophila schnurri, KRC, regulates TNF receptor-driven responses and interacts with TRAF2.</title>
        <authorList>
            <person name="Oukka M."/>
            <person name="Kim S.T."/>
            <person name="Lugo G."/>
            <person name="Sun J."/>
            <person name="Wu L.-C."/>
            <person name="Glimcher L.H."/>
        </authorList>
    </citation>
    <scope>INTERACTION WITH HIVEP3</scope>
</reference>
<reference key="8">
    <citation type="journal article" date="2006" name="Int. Immunol.">
        <title>TRAF1 regulates Th2 differentiation, allergic inflammation and nuclear localization of the Th2 transcription factor, NIP45.</title>
        <authorList>
            <person name="Bryce P.J."/>
            <person name="Oyoshi M.K."/>
            <person name="Kawamoto S."/>
            <person name="Oettgen H.C."/>
            <person name="Tsitsikov E.N."/>
        </authorList>
    </citation>
    <scope>INTERACTION WITH NFATC2IP</scope>
</reference>
<reference key="9">
    <citation type="journal article" date="2008" name="Genes Cells">
        <title>Negative regulation of constitutive NF-kappaB and JNK signaling by PKN1-mediated phosphorylation of TRAF1.</title>
        <authorList>
            <person name="Kato T. Jr."/>
            <person name="Gotoh Y."/>
            <person name="Hoffmann A."/>
            <person name="Ono Y."/>
        </authorList>
    </citation>
    <scope>FUNCTION</scope>
    <scope>PHOSPHORYLATION AT SER-139</scope>
    <scope>INTERACTION WITH TNFRSF1B</scope>
    <scope>MUTAGENESIS OF SER-139</scope>
</reference>
<reference key="10">
    <citation type="journal article" date="2008" name="J. Biol. Chem.">
        <title>FLN29 deficiency reveals its negative regulatory role in the Toll-like receptor (TLR) and retinoic acid-inducible gene I (RIG-I)-like helicase signaling pathway.</title>
        <authorList>
            <person name="Sanada T."/>
            <person name="Takaesu G."/>
            <person name="Mashima R."/>
            <person name="Yoshida R."/>
            <person name="Kobayashi T."/>
            <person name="Yoshimura A."/>
        </authorList>
    </citation>
    <scope>INTERACTION WITH TRAFD1</scope>
</reference>
<reference key="11">
    <citation type="journal article" date="2009" name="Immunity">
        <title>The phagosomal proteome in interferon-gamma-activated macrophages.</title>
        <authorList>
            <person name="Trost M."/>
            <person name="English L."/>
            <person name="Lemieux S."/>
            <person name="Courcelles M."/>
            <person name="Desjardins M."/>
            <person name="Thibault P."/>
        </authorList>
    </citation>
    <scope>IDENTIFICATION BY MASS SPECTROMETRY [LARGE SCALE ANALYSIS]</scope>
</reference>
<reference key="12">
    <citation type="journal article" date="2012" name="Mol. Cell">
        <title>A protective strategy against hyperinflammatory responses requiring the nontranscriptional actions of GPS2.</title>
        <authorList>
            <person name="Cardamone M.D."/>
            <person name="Krones A."/>
            <person name="Tanasa B."/>
            <person name="Taylor H."/>
            <person name="Ricci L."/>
            <person name="Ohgi K.A."/>
            <person name="Glass C.K."/>
            <person name="Rosenfeld M.G."/>
            <person name="Perissi V."/>
        </authorList>
    </citation>
    <scope>INTERACTION WITH GPS2</scope>
</reference>
<reference key="13">
    <citation type="journal article" date="2013" name="Nat. Immunol.">
        <title>A combinatorial F box protein directed pathway controls TRAF adaptor stability to regulate inflammation.</title>
        <authorList>
            <person name="Chen B.B."/>
            <person name="Coon T.A."/>
            <person name="Glasser J.R."/>
            <person name="McVerry B.J."/>
            <person name="Zhao J."/>
            <person name="Zhao Y."/>
            <person name="Zou C."/>
            <person name="Ellis B."/>
            <person name="Sciurba F.C."/>
            <person name="Zhang Y."/>
            <person name="Mallampalli R.K."/>
        </authorList>
    </citation>
    <scope>UBIQUITINATION</scope>
    <scope>MUTAGENESIS OF TRP-264</scope>
</reference>
<comment type="function">
    <text evidence="1 4 7">Adapter molecule that regulates the activation of NF-kappa-B and JNK. Plays a role in the regulation of cell survival and apoptosis. The heterotrimer formed by TRAF1 and TRAF2 is part of a E3 ubiquitin-protein ligase complex that promotes ubiquitination of target proteins, such as MAP3K14. The TRAF1/TRAF2 complex recruits the antiapoptotic E3 protein-ubiquitin ligases BIRC2 and BIRC3 to TNFRSF1B/TNFR2 (By similarity).</text>
</comment>
<comment type="subunit">
    <text evidence="2 5 6 7 8 9 11 12">Homotrimer (By similarity). Heterotrimer with TRAF2 (PubMed:8069916). Interacts with TNFRSF1A/TNFR1, TNFRSF1B/TNFR2, TNFRSF4, TNFRSF5/CD40, TNFRSF8/CD30, TNFRSF9/CD137, TNFRSF11A/RANK, TNFRSF13C, TNFRSF18/AITR, TNFRSF17/BCMA, TNFRSF19/TROY, TNFRSF19L/RELT, XEDAR, EDAR, Epstein-Barr virus BNFL1/LMP-1, TANK/ITRAF, TRAIP and RIPK2 (PubMed:18429822, PubMed:8069916, PubMed:9104814). Interacts with BIRC2 and BIRC3 N-terminus; a single BIRC2 or BIRC3 molecule interacts with a heterotrimer formed by TRAF1 and TRAF2. Interacts with MAP3K14 (By similarity). Interacts with NFATC2IP, TRAFD1 and with HIVEP3 (PubMed:11804591, PubMed:16352630, PubMed:18849341). Interacts with GPS2 (PubMed:22424771).</text>
</comment>
<comment type="interaction">
    <interactant intactId="EBI-520123">
        <id>P39428</id>
    </interactant>
    <interactant intactId="EBI-646982">
        <id>P50247</id>
        <label>Ahcy</label>
    </interactant>
    <organismsDiffer>false</organismsDiffer>
    <experiments>3</experiments>
</comment>
<comment type="interaction">
    <interactant intactId="EBI-520123">
        <id>P39428</id>
    </interactant>
    <interactant intactId="EBI-646920">
        <id>Q9Z104</id>
        <label>Hmg20b</label>
    </interactant>
    <organismsDiffer>false</organismsDiffer>
    <experiments>3</experiments>
</comment>
<comment type="interaction">
    <interactant intactId="EBI-520123">
        <id>P39428</id>
    </interactant>
    <interactant intactId="EBI-646708">
        <id>Q8C886</id>
        <label>Plekhn1</label>
    </interactant>
    <organismsDiffer>false</organismsDiffer>
    <experiments>6</experiments>
</comment>
<comment type="interaction">
    <interactant intactId="EBI-520123">
        <id>P39428</id>
    </interactant>
    <interactant intactId="EBI-646125">
        <id>P70347-1</id>
        <label>Tank</label>
    </interactant>
    <organismsDiffer>false</organismsDiffer>
    <experiments>12</experiments>
</comment>
<comment type="interaction">
    <interactant intactId="EBI-520123">
        <id>P39428</id>
    </interactant>
    <interactant intactId="EBI-646713">
        <id>Q924A0</id>
        <label>Tcf7l2</label>
    </interactant>
    <organismsDiffer>false</organismsDiffer>
    <experiments>6</experiments>
</comment>
<comment type="subcellular location">
    <subcellularLocation>
        <location>Cytoplasm</location>
    </subcellularLocation>
</comment>
<comment type="domain">
    <text evidence="1">The coiled coil domain mediates homo- and hetero-oligomerization.</text>
</comment>
<comment type="domain">
    <text>The MATH/TRAF domain binds to receptor cytoplasmic domains.</text>
</comment>
<comment type="domain">
    <text evidence="1">Cleavage by CASP8 liberates a C-terminal fragment that promotes apoptosis and inhibits the activation of NF-kappa-B in response to TNF signaling.</text>
</comment>
<comment type="PTM">
    <text evidence="2 10">Polyubiquitinated by BIRC2 and/or BIRC3, leading to its subsequent proteasomal degradation (By similarity). Ubiquitinated by the SCF(FBXL2) complex, leading to its degradation by the proteasome (PubMed:23542741).</text>
</comment>
<comment type="disruption phenotype">
    <text evidence="4">No visible phenotype. Mice have normal B-cell proliferation and antibody response, but increased T-cell proliferation in response to CD3 signaling. Their T-cells show enhanced activation of JNK and NF-kappa-B. Mice are highly susceptible to TNF-induced skin necrosis.</text>
</comment>
<comment type="caution">
    <text evidence="13">Lacks a RING domain and has therefore no E3 ubiquitin-protein ligase activity by itself.</text>
</comment>